<name>SUCC_SHEB9</name>
<organism>
    <name type="scientific">Shewanella baltica (strain OS195)</name>
    <dbReference type="NCBI Taxonomy" id="399599"/>
    <lineage>
        <taxon>Bacteria</taxon>
        <taxon>Pseudomonadati</taxon>
        <taxon>Pseudomonadota</taxon>
        <taxon>Gammaproteobacteria</taxon>
        <taxon>Alteromonadales</taxon>
        <taxon>Shewanellaceae</taxon>
        <taxon>Shewanella</taxon>
    </lineage>
</organism>
<gene>
    <name evidence="1" type="primary">sucC</name>
    <name type="ordered locus">Sbal195_2626</name>
</gene>
<comment type="function">
    <text evidence="1">Succinyl-CoA synthetase functions in the citric acid cycle (TCA), coupling the hydrolysis of succinyl-CoA to the synthesis of either ATP or GTP and thus represents the only step of substrate-level phosphorylation in the TCA. The beta subunit provides nucleotide specificity of the enzyme and binds the substrate succinate, while the binding sites for coenzyme A and phosphate are found in the alpha subunit.</text>
</comment>
<comment type="catalytic activity">
    <reaction evidence="1">
        <text>succinate + ATP + CoA = succinyl-CoA + ADP + phosphate</text>
        <dbReference type="Rhea" id="RHEA:17661"/>
        <dbReference type="ChEBI" id="CHEBI:30031"/>
        <dbReference type="ChEBI" id="CHEBI:30616"/>
        <dbReference type="ChEBI" id="CHEBI:43474"/>
        <dbReference type="ChEBI" id="CHEBI:57287"/>
        <dbReference type="ChEBI" id="CHEBI:57292"/>
        <dbReference type="ChEBI" id="CHEBI:456216"/>
        <dbReference type="EC" id="6.2.1.5"/>
    </reaction>
    <physiologicalReaction direction="right-to-left" evidence="1">
        <dbReference type="Rhea" id="RHEA:17663"/>
    </physiologicalReaction>
</comment>
<comment type="catalytic activity">
    <reaction evidence="1">
        <text>GTP + succinate + CoA = succinyl-CoA + GDP + phosphate</text>
        <dbReference type="Rhea" id="RHEA:22120"/>
        <dbReference type="ChEBI" id="CHEBI:30031"/>
        <dbReference type="ChEBI" id="CHEBI:37565"/>
        <dbReference type="ChEBI" id="CHEBI:43474"/>
        <dbReference type="ChEBI" id="CHEBI:57287"/>
        <dbReference type="ChEBI" id="CHEBI:57292"/>
        <dbReference type="ChEBI" id="CHEBI:58189"/>
    </reaction>
    <physiologicalReaction direction="right-to-left" evidence="1">
        <dbReference type="Rhea" id="RHEA:22122"/>
    </physiologicalReaction>
</comment>
<comment type="cofactor">
    <cofactor evidence="1">
        <name>Mg(2+)</name>
        <dbReference type="ChEBI" id="CHEBI:18420"/>
    </cofactor>
    <text evidence="1">Binds 1 Mg(2+) ion per subunit.</text>
</comment>
<comment type="pathway">
    <text evidence="1">Carbohydrate metabolism; tricarboxylic acid cycle; succinate from succinyl-CoA (ligase route): step 1/1.</text>
</comment>
<comment type="subunit">
    <text evidence="1">Heterotetramer of two alpha and two beta subunits.</text>
</comment>
<comment type="similarity">
    <text evidence="1">Belongs to the succinate/malate CoA ligase beta subunit family.</text>
</comment>
<keyword id="KW-0067">ATP-binding</keyword>
<keyword id="KW-0436">Ligase</keyword>
<keyword id="KW-0460">Magnesium</keyword>
<keyword id="KW-0479">Metal-binding</keyword>
<keyword id="KW-0547">Nucleotide-binding</keyword>
<keyword id="KW-0816">Tricarboxylic acid cycle</keyword>
<dbReference type="EC" id="6.2.1.5" evidence="1"/>
<dbReference type="EMBL" id="CP000891">
    <property type="protein sequence ID" value="ABX49794.1"/>
    <property type="molecule type" value="Genomic_DNA"/>
</dbReference>
<dbReference type="RefSeq" id="WP_006081976.1">
    <property type="nucleotide sequence ID" value="NC_009997.1"/>
</dbReference>
<dbReference type="SMR" id="A9L532"/>
<dbReference type="GeneID" id="11772717"/>
<dbReference type="KEGG" id="sbn:Sbal195_2626"/>
<dbReference type="HOGENOM" id="CLU_037430_0_2_6"/>
<dbReference type="UniPathway" id="UPA00223">
    <property type="reaction ID" value="UER00999"/>
</dbReference>
<dbReference type="Proteomes" id="UP000000770">
    <property type="component" value="Chromosome"/>
</dbReference>
<dbReference type="GO" id="GO:0005829">
    <property type="term" value="C:cytosol"/>
    <property type="evidence" value="ECO:0007669"/>
    <property type="project" value="TreeGrafter"/>
</dbReference>
<dbReference type="GO" id="GO:0042709">
    <property type="term" value="C:succinate-CoA ligase complex"/>
    <property type="evidence" value="ECO:0007669"/>
    <property type="project" value="TreeGrafter"/>
</dbReference>
<dbReference type="GO" id="GO:0005524">
    <property type="term" value="F:ATP binding"/>
    <property type="evidence" value="ECO:0007669"/>
    <property type="project" value="UniProtKB-UniRule"/>
</dbReference>
<dbReference type="GO" id="GO:0000287">
    <property type="term" value="F:magnesium ion binding"/>
    <property type="evidence" value="ECO:0007669"/>
    <property type="project" value="UniProtKB-UniRule"/>
</dbReference>
<dbReference type="GO" id="GO:0004775">
    <property type="term" value="F:succinate-CoA ligase (ADP-forming) activity"/>
    <property type="evidence" value="ECO:0007669"/>
    <property type="project" value="UniProtKB-UniRule"/>
</dbReference>
<dbReference type="GO" id="GO:0004776">
    <property type="term" value="F:succinate-CoA ligase (GDP-forming) activity"/>
    <property type="evidence" value="ECO:0007669"/>
    <property type="project" value="RHEA"/>
</dbReference>
<dbReference type="GO" id="GO:0006104">
    <property type="term" value="P:succinyl-CoA metabolic process"/>
    <property type="evidence" value="ECO:0007669"/>
    <property type="project" value="TreeGrafter"/>
</dbReference>
<dbReference type="GO" id="GO:0006099">
    <property type="term" value="P:tricarboxylic acid cycle"/>
    <property type="evidence" value="ECO:0007669"/>
    <property type="project" value="UniProtKB-UniRule"/>
</dbReference>
<dbReference type="FunFam" id="3.30.1490.20:FF:000002">
    <property type="entry name" value="Succinate--CoA ligase [ADP-forming] subunit beta"/>
    <property type="match status" value="1"/>
</dbReference>
<dbReference type="FunFam" id="3.30.470.20:FF:000002">
    <property type="entry name" value="Succinate--CoA ligase [ADP-forming] subunit beta"/>
    <property type="match status" value="1"/>
</dbReference>
<dbReference type="FunFam" id="3.40.50.261:FF:000001">
    <property type="entry name" value="Succinate--CoA ligase [ADP-forming] subunit beta"/>
    <property type="match status" value="1"/>
</dbReference>
<dbReference type="Gene3D" id="3.30.1490.20">
    <property type="entry name" value="ATP-grasp fold, A domain"/>
    <property type="match status" value="1"/>
</dbReference>
<dbReference type="Gene3D" id="3.30.470.20">
    <property type="entry name" value="ATP-grasp fold, B domain"/>
    <property type="match status" value="1"/>
</dbReference>
<dbReference type="Gene3D" id="3.40.50.261">
    <property type="entry name" value="Succinyl-CoA synthetase domains"/>
    <property type="match status" value="1"/>
</dbReference>
<dbReference type="HAMAP" id="MF_00558">
    <property type="entry name" value="Succ_CoA_beta"/>
    <property type="match status" value="1"/>
</dbReference>
<dbReference type="InterPro" id="IPR011761">
    <property type="entry name" value="ATP-grasp"/>
</dbReference>
<dbReference type="InterPro" id="IPR013650">
    <property type="entry name" value="ATP-grasp_succ-CoA_synth-type"/>
</dbReference>
<dbReference type="InterPro" id="IPR013815">
    <property type="entry name" value="ATP_grasp_subdomain_1"/>
</dbReference>
<dbReference type="InterPro" id="IPR017866">
    <property type="entry name" value="Succ-CoA_synthase_bsu_CS"/>
</dbReference>
<dbReference type="InterPro" id="IPR005811">
    <property type="entry name" value="SUCC_ACL_C"/>
</dbReference>
<dbReference type="InterPro" id="IPR005809">
    <property type="entry name" value="Succ_CoA_ligase-like_bsu"/>
</dbReference>
<dbReference type="InterPro" id="IPR016102">
    <property type="entry name" value="Succinyl-CoA_synth-like"/>
</dbReference>
<dbReference type="NCBIfam" id="NF001913">
    <property type="entry name" value="PRK00696.1"/>
    <property type="match status" value="1"/>
</dbReference>
<dbReference type="NCBIfam" id="TIGR01016">
    <property type="entry name" value="sucCoAbeta"/>
    <property type="match status" value="1"/>
</dbReference>
<dbReference type="PANTHER" id="PTHR11815:SF10">
    <property type="entry name" value="SUCCINATE--COA LIGASE [GDP-FORMING] SUBUNIT BETA, MITOCHONDRIAL"/>
    <property type="match status" value="1"/>
</dbReference>
<dbReference type="PANTHER" id="PTHR11815">
    <property type="entry name" value="SUCCINYL-COA SYNTHETASE BETA CHAIN"/>
    <property type="match status" value="1"/>
</dbReference>
<dbReference type="Pfam" id="PF08442">
    <property type="entry name" value="ATP-grasp_2"/>
    <property type="match status" value="1"/>
</dbReference>
<dbReference type="Pfam" id="PF00549">
    <property type="entry name" value="Ligase_CoA"/>
    <property type="match status" value="1"/>
</dbReference>
<dbReference type="PIRSF" id="PIRSF001554">
    <property type="entry name" value="SucCS_beta"/>
    <property type="match status" value="1"/>
</dbReference>
<dbReference type="SUPFAM" id="SSF56059">
    <property type="entry name" value="Glutathione synthetase ATP-binding domain-like"/>
    <property type="match status" value="1"/>
</dbReference>
<dbReference type="SUPFAM" id="SSF52210">
    <property type="entry name" value="Succinyl-CoA synthetase domains"/>
    <property type="match status" value="1"/>
</dbReference>
<dbReference type="PROSITE" id="PS50975">
    <property type="entry name" value="ATP_GRASP"/>
    <property type="match status" value="1"/>
</dbReference>
<dbReference type="PROSITE" id="PS01217">
    <property type="entry name" value="SUCCINYL_COA_LIG_3"/>
    <property type="match status" value="1"/>
</dbReference>
<protein>
    <recommendedName>
        <fullName evidence="1">Succinate--CoA ligase [ADP-forming] subunit beta</fullName>
        <ecNumber evidence="1">6.2.1.5</ecNumber>
    </recommendedName>
    <alternativeName>
        <fullName evidence="1">Succinyl-CoA synthetase subunit beta</fullName>
        <shortName evidence="1">SCS-beta</shortName>
    </alternativeName>
</protein>
<feature type="chain" id="PRO_1000082220" description="Succinate--CoA ligase [ADP-forming] subunit beta">
    <location>
        <begin position="1"/>
        <end position="388"/>
    </location>
</feature>
<feature type="domain" description="ATP-grasp" evidence="1">
    <location>
        <begin position="9"/>
        <end position="244"/>
    </location>
</feature>
<feature type="binding site" evidence="1">
    <location>
        <position position="46"/>
    </location>
    <ligand>
        <name>ATP</name>
        <dbReference type="ChEBI" id="CHEBI:30616"/>
    </ligand>
</feature>
<feature type="binding site" evidence="1">
    <location>
        <begin position="53"/>
        <end position="55"/>
    </location>
    <ligand>
        <name>ATP</name>
        <dbReference type="ChEBI" id="CHEBI:30616"/>
    </ligand>
</feature>
<feature type="binding site" evidence="1">
    <location>
        <position position="99"/>
    </location>
    <ligand>
        <name>ATP</name>
        <dbReference type="ChEBI" id="CHEBI:30616"/>
    </ligand>
</feature>
<feature type="binding site" evidence="1">
    <location>
        <position position="102"/>
    </location>
    <ligand>
        <name>ATP</name>
        <dbReference type="ChEBI" id="CHEBI:30616"/>
    </ligand>
</feature>
<feature type="binding site" evidence="1">
    <location>
        <position position="107"/>
    </location>
    <ligand>
        <name>ATP</name>
        <dbReference type="ChEBI" id="CHEBI:30616"/>
    </ligand>
</feature>
<feature type="binding site" evidence="1">
    <location>
        <position position="199"/>
    </location>
    <ligand>
        <name>Mg(2+)</name>
        <dbReference type="ChEBI" id="CHEBI:18420"/>
    </ligand>
</feature>
<feature type="binding site" evidence="1">
    <location>
        <position position="213"/>
    </location>
    <ligand>
        <name>Mg(2+)</name>
        <dbReference type="ChEBI" id="CHEBI:18420"/>
    </ligand>
</feature>
<feature type="binding site" evidence="1">
    <location>
        <position position="264"/>
    </location>
    <ligand>
        <name>substrate</name>
        <note>ligand shared with subunit alpha</note>
    </ligand>
</feature>
<feature type="binding site" evidence="1">
    <location>
        <begin position="321"/>
        <end position="323"/>
    </location>
    <ligand>
        <name>substrate</name>
        <note>ligand shared with subunit alpha</note>
    </ligand>
</feature>
<accession>A9L532</accession>
<evidence type="ECO:0000255" key="1">
    <source>
        <dbReference type="HAMAP-Rule" id="MF_00558"/>
    </source>
</evidence>
<proteinExistence type="inferred from homology"/>
<reference key="1">
    <citation type="submission" date="2007-11" db="EMBL/GenBank/DDBJ databases">
        <title>Complete sequence of chromosome of Shewanella baltica OS195.</title>
        <authorList>
            <consortium name="US DOE Joint Genome Institute"/>
            <person name="Copeland A."/>
            <person name="Lucas S."/>
            <person name="Lapidus A."/>
            <person name="Barry K."/>
            <person name="Glavina del Rio T."/>
            <person name="Dalin E."/>
            <person name="Tice H."/>
            <person name="Pitluck S."/>
            <person name="Chain P."/>
            <person name="Malfatti S."/>
            <person name="Shin M."/>
            <person name="Vergez L."/>
            <person name="Schmutz J."/>
            <person name="Larimer F."/>
            <person name="Land M."/>
            <person name="Hauser L."/>
            <person name="Kyrpides N."/>
            <person name="Kim E."/>
            <person name="Brettar I."/>
            <person name="Rodrigues J."/>
            <person name="Konstantinidis K."/>
            <person name="Klappenbach J."/>
            <person name="Hofle M."/>
            <person name="Tiedje J."/>
            <person name="Richardson P."/>
        </authorList>
    </citation>
    <scope>NUCLEOTIDE SEQUENCE [LARGE SCALE GENOMIC DNA]</scope>
    <source>
        <strain>OS195</strain>
    </source>
</reference>
<sequence>MNLHEYQAKSLFAEYGLPVSEGFACDTAQEAVEAAGHIGGNLWVVKCQVHAGGRGKAGGVKVTGDKEEIRAFAEHWLGKNLVTYQTDEKGQPVAKILVESCTDIANELYLGAVVDRATRRVVFMASTEGGVEIEKVAEETPELIHTAIIDPLTGPQGYQARDLGFKLGLNPTQMKQFTKIFMGLATMFVDHDFALLEINPLVITTEGNLHCLDGKIGIDGNALYRQPKIKGMHDPSQDDAREAHAAKFELNYVALDGNVGCMVNGAGLAMGTMDIVNLHGGKPANFLDVGGGATKERVAEAFKIILSDSNVKAVLVNIFGGIVRCDMIAEGIIGAVKEVGVKVPVVVRLEGTNAELGREVLAKSGLDIIAATSLTDAAEQVVKAAEGK</sequence>